<comment type="subcellular location">
    <subcellularLocation>
        <location>Plastid</location>
        <location>Chloroplast</location>
    </subcellularLocation>
</comment>
<comment type="similarity">
    <text evidence="1">Belongs to the ycf88 family.</text>
</comment>
<dbReference type="EMBL" id="Z67753">
    <property type="protein sequence ID" value="CAA91644.1"/>
    <property type="molecule type" value="Genomic_DNA"/>
</dbReference>
<dbReference type="PIR" id="S78271">
    <property type="entry name" value="S78271"/>
</dbReference>
<dbReference type="GO" id="GO:0009507">
    <property type="term" value="C:chloroplast"/>
    <property type="evidence" value="ECO:0007669"/>
    <property type="project" value="UniProtKB-SubCell"/>
</dbReference>
<dbReference type="InterPro" id="IPR007110">
    <property type="entry name" value="Ig-like_dom"/>
</dbReference>
<protein>
    <recommendedName>
        <fullName>Uncharacterized protein ycf88</fullName>
    </recommendedName>
    <alternativeName>
        <fullName>ORF148</fullName>
    </alternativeName>
</protein>
<geneLocation type="chloroplast"/>
<sequence>MNISSLIEDGVYPFEKDKVKQNYQKGNFEPIFQTFNVKYDKTLSARTKLILKTWKGKAFYYVNEDILYLLNIDQVEQDFLLKILHSMGIFLQNATSASFFDIYIYDINITEVPYYKSQKLENGTLLDSLTFTLKCYVTPPPEKPEIPW</sequence>
<proteinExistence type="inferred from homology"/>
<accession>P49829</accession>
<name>YCF88_TRICV</name>
<keyword id="KW-0150">Chloroplast</keyword>
<keyword id="KW-0934">Plastid</keyword>
<gene>
    <name type="primary">ycf88</name>
</gene>
<organism>
    <name type="scientific">Trieres chinensis</name>
    <name type="common">Marine centric diatom</name>
    <name type="synonym">Odontella sinensis</name>
    <dbReference type="NCBI Taxonomy" id="1514140"/>
    <lineage>
        <taxon>Eukaryota</taxon>
        <taxon>Sar</taxon>
        <taxon>Stramenopiles</taxon>
        <taxon>Ochrophyta</taxon>
        <taxon>Bacillariophyta</taxon>
        <taxon>Mediophyceae</taxon>
        <taxon>Biddulphiophycidae</taxon>
        <taxon>Eupodiscales</taxon>
        <taxon>Parodontellaceae</taxon>
        <taxon>Trieres</taxon>
    </lineage>
</organism>
<reference key="1">
    <citation type="journal article" date="1995" name="Plant Mol. Biol. Rep.">
        <title>The chloroplast genome of a chlorophyll a+c-containing alga, Odontella sinensis.</title>
        <authorList>
            <person name="Kowallik K.V."/>
            <person name="Stoebe B."/>
            <person name="Schaffran I."/>
            <person name="Kroth-Pancic P."/>
            <person name="Freier U."/>
        </authorList>
    </citation>
    <scope>NUCLEOTIDE SEQUENCE [LARGE SCALE GENOMIC DNA]</scope>
</reference>
<feature type="chain" id="PRO_0000217455" description="Uncharacterized protein ycf88">
    <location>
        <begin position="1"/>
        <end position="148"/>
    </location>
</feature>
<evidence type="ECO:0000305" key="1"/>